<evidence type="ECO:0000305" key="1"/>
<feature type="chain" id="PRO_0000217246" description="Polyhedrin">
    <location>
        <begin position="1"/>
        <end position="246"/>
    </location>
</feature>
<dbReference type="PIR" id="B40233">
    <property type="entry name" value="PYNVPA"/>
</dbReference>
<dbReference type="SMR" id="P31036"/>
<dbReference type="GO" id="GO:0039679">
    <property type="term" value="C:viral occlusion body"/>
    <property type="evidence" value="ECO:0007669"/>
    <property type="project" value="UniProtKB-KW"/>
</dbReference>
<dbReference type="GO" id="GO:0005198">
    <property type="term" value="F:structural molecule activity"/>
    <property type="evidence" value="ECO:0007669"/>
    <property type="project" value="InterPro"/>
</dbReference>
<dbReference type="InterPro" id="IPR001746">
    <property type="entry name" value="Polyhedrin"/>
</dbReference>
<dbReference type="Pfam" id="PF00738">
    <property type="entry name" value="Polyhedrin"/>
    <property type="match status" value="1"/>
</dbReference>
<name>PYHD_NPVAS</name>
<comment type="function">
    <text>Major component of the virus occlusion bodies, which are large proteinaceous structures (polyhedra), that protect the virus from the outside environment for extended periods until they are ingested by insect larvae.</text>
</comment>
<comment type="similarity">
    <text evidence="1">Belongs to the polyhedrin family.</text>
</comment>
<sequence length="246" mass="28918">MRNFYSYNPTIGRTYVYDNKFYKNLGSVIKNAKRKQHLIEHLKEEKQLDPLDTFMVAEDPFLGPGKNQKLTLFKEVRNVKPDTMKLVVNWSGKEFLRETWTRFMEDSFPIVNDQEVMDIFLEANLKPTRPNRCYRFLAQHALRCDPDYVPHEVIRIVEPDYVGVGNEYRISLAKRGGGCPIMNLNSEYNNSFESFIERVIWENFYRNNVYIGTDSAEEEEILLELSLLFKVKEFAPDIPLYSGPAY</sequence>
<gene>
    <name type="primary">PH</name>
    <name type="synonym">P29</name>
    <name type="synonym">POLH</name>
</gene>
<protein>
    <recommendedName>
        <fullName>Polyhedrin</fullName>
    </recommendedName>
    <alternativeName>
        <fullName>Major occlusion protein</fullName>
    </alternativeName>
</protein>
<reference key="1">
    <citation type="journal article" date="1992" name="Virology">
        <title>The amino acid sequence determination of a granulin and polyhedrin from two baculoviruses infecting Agrotis segetum.</title>
        <authorList>
            <person name="Kozlov E.A."/>
            <person name="Rodnin N.V."/>
            <person name="Levitina T.L."/>
            <person name="Gusak N.M."/>
            <person name="Radomskij N.F."/>
            <person name="Palchikovskaya L.J."/>
        </authorList>
    </citation>
    <scope>PROTEIN SEQUENCE</scope>
</reference>
<keyword id="KW-0903">Direct protein sequencing</keyword>
<keyword id="KW-0842">Viral occlusion body</keyword>
<accession>P31036</accession>
<organismHost>
    <name type="scientific">Lepidoptera</name>
    <name type="common">butterflies and moths</name>
    <dbReference type="NCBI Taxonomy" id="7088"/>
</organismHost>
<organism>
    <name type="scientific">Agrotis segetum nuclear polyhedrosis virus</name>
    <name type="common">AsNPV</name>
    <dbReference type="NCBI Taxonomy" id="1962501"/>
    <lineage>
        <taxon>Viruses</taxon>
        <taxon>Viruses incertae sedis</taxon>
        <taxon>Naldaviricetes</taxon>
        <taxon>Lefavirales</taxon>
        <taxon>Baculoviridae</taxon>
        <taxon>Alphabaculovirus</taxon>
        <taxon>Alphabaculovirus agsegetum</taxon>
    </lineage>
</organism>
<proteinExistence type="evidence at protein level"/>